<evidence type="ECO:0000250" key="1"/>
<evidence type="ECO:0000255" key="2"/>
<evidence type="ECO:0000256" key="3">
    <source>
        <dbReference type="SAM" id="MobiDB-lite"/>
    </source>
</evidence>
<evidence type="ECO:0000269" key="4">
    <source>
    </source>
</evidence>
<evidence type="ECO:0000269" key="5">
    <source>
    </source>
</evidence>
<evidence type="ECO:0000305" key="6"/>
<accession>Q9VLC0</accession>
<sequence>MATTRSAGGAATSVDTGPAAGNSGIRKLSTASVGGIAGGVAPSWQSCYYCTREHFKSISDFVNHLRNRHCTREGGSFVCRYGFNGVCASLPLDGVSDRDYDAHVAKYHVNQHTREMPPEWGVYSAAQNLPAVLNDPSRGKQSNLFTKKWGEHFVERSHVPPSPRLPDITHADFTVYLGSIGKRYRWHERRQQQLERDKPLENGAQGAPGPGTGGQTPTHLSSVPEIFLKSQLQLHHPATFKQVFPNYMQTSASSPESHQQTGRQLQEQLSHYLDMVEVKIAQQVSQKSAAFFHAMTTQHAILAEMEQAADQVRQLRAALAELHSHSVVDSFKVLRFAQRRQHYNLTLDKLRLMATVHKTQPMLQLLLGTQDYVAALDLIGTTQEILSAELLGIHCFKHLPMQLSEMEKLIDKMLTTEFERYAAADLNRPLTDALRETDSVCAEEDKLVAIVMGLLRKQNFSFVQAYQQEAIATIRAIIKQLLIEVLARSDSDQEISLTGHGEQALELTLPEWIALLQRSSQALVSILERIKTVVGIMQQTADAAVGAQDAVNLIDSEAFLSPGHHEQLKNQLQQLLQAVCHYCHERCANIVSPQSLERSSASEQELFQLSEIVDHFGETTRSICGVASVPLQLALKVQASRYAQRFHSERKQKLSLLLDQERWRQVDIPHEFQRIIERMAAGDYAKPEMGNLISNGAGNPVLLVEGKQPYTLVSASLMLIRMLYEYGCSAHRLPLLASYHARNVVDLLRCFNSRSCQLIIGAGAMRVAGLKTITSTNLALVSRALQLVLWLLPKLKEHFQAMSGYETIERDYQGHIKEIENKIHGIVSERLAAQLDAWEARPPIPSQTFRHISRHLVKLHEAIAGVLPEAQIHEIYGVVHRNFKDKLREQLLKLNVNNNGGPQHGVVTSELTFYMETLRTLKALPAEQLDNGILEEIWLY</sequence>
<organism>
    <name type="scientific">Drosophila melanogaster</name>
    <name type="common">Fruit fly</name>
    <dbReference type="NCBI Taxonomy" id="7227"/>
    <lineage>
        <taxon>Eukaryota</taxon>
        <taxon>Metazoa</taxon>
        <taxon>Ecdysozoa</taxon>
        <taxon>Arthropoda</taxon>
        <taxon>Hexapoda</taxon>
        <taxon>Insecta</taxon>
        <taxon>Pterygota</taxon>
        <taxon>Neoptera</taxon>
        <taxon>Endopterygota</taxon>
        <taxon>Diptera</taxon>
        <taxon>Brachycera</taxon>
        <taxon>Muscomorpha</taxon>
        <taxon>Ephydroidea</taxon>
        <taxon>Drosophilidae</taxon>
        <taxon>Drosophila</taxon>
        <taxon>Sophophora</taxon>
    </lineage>
</organism>
<name>VPS54_DROME</name>
<feature type="chain" id="PRO_0000148736" description="Vacuolar protein sorting-associated protein 54">
    <location>
        <begin position="1"/>
        <end position="940"/>
    </location>
</feature>
<feature type="region of interest" description="Disordered" evidence="3">
    <location>
        <begin position="192"/>
        <end position="218"/>
    </location>
</feature>
<feature type="coiled-coil region" evidence="2">
    <location>
        <begin position="299"/>
        <end position="325"/>
    </location>
</feature>
<feature type="modified residue" description="Phosphothreonine" evidence="4">
    <location>
        <position position="30"/>
    </location>
</feature>
<keyword id="KW-0175">Coiled coil</keyword>
<keyword id="KW-0217">Developmental protein</keyword>
<keyword id="KW-0221">Differentiation</keyword>
<keyword id="KW-0333">Golgi apparatus</keyword>
<keyword id="KW-0597">Phosphoprotein</keyword>
<keyword id="KW-0653">Protein transport</keyword>
<keyword id="KW-1185">Reference proteome</keyword>
<keyword id="KW-0744">Spermatogenesis</keyword>
<keyword id="KW-0813">Transport</keyword>
<gene>
    <name type="primary">scat</name>
    <name type="ORF">CG3766</name>
</gene>
<comment type="function">
    <text evidence="1 5">May be involved in retrograde transport from early and late endosomes to late Golgi (By similarity). Required during spermatogenesis for sperm individualization.</text>
</comment>
<comment type="subcellular location">
    <subcellularLocation>
        <location evidence="1">Golgi apparatus</location>
        <location evidence="1">trans-Golgi network</location>
    </subcellularLocation>
</comment>
<comment type="similarity">
    <text evidence="6">Belongs to the VPS54 family.</text>
</comment>
<proteinExistence type="evidence at protein level"/>
<reference key="1">
    <citation type="journal article" date="2000" name="Science">
        <title>The genome sequence of Drosophila melanogaster.</title>
        <authorList>
            <person name="Adams M.D."/>
            <person name="Celniker S.E."/>
            <person name="Holt R.A."/>
            <person name="Evans C.A."/>
            <person name="Gocayne J.D."/>
            <person name="Amanatides P.G."/>
            <person name="Scherer S.E."/>
            <person name="Li P.W."/>
            <person name="Hoskins R.A."/>
            <person name="Galle R.F."/>
            <person name="George R.A."/>
            <person name="Lewis S.E."/>
            <person name="Richards S."/>
            <person name="Ashburner M."/>
            <person name="Henderson S.N."/>
            <person name="Sutton G.G."/>
            <person name="Wortman J.R."/>
            <person name="Yandell M.D."/>
            <person name="Zhang Q."/>
            <person name="Chen L.X."/>
            <person name="Brandon R.C."/>
            <person name="Rogers Y.-H.C."/>
            <person name="Blazej R.G."/>
            <person name="Champe M."/>
            <person name="Pfeiffer B.D."/>
            <person name="Wan K.H."/>
            <person name="Doyle C."/>
            <person name="Baxter E.G."/>
            <person name="Helt G."/>
            <person name="Nelson C.R."/>
            <person name="Miklos G.L.G."/>
            <person name="Abril J.F."/>
            <person name="Agbayani A."/>
            <person name="An H.-J."/>
            <person name="Andrews-Pfannkoch C."/>
            <person name="Baldwin D."/>
            <person name="Ballew R.M."/>
            <person name="Basu A."/>
            <person name="Baxendale J."/>
            <person name="Bayraktaroglu L."/>
            <person name="Beasley E.M."/>
            <person name="Beeson K.Y."/>
            <person name="Benos P.V."/>
            <person name="Berman B.P."/>
            <person name="Bhandari D."/>
            <person name="Bolshakov S."/>
            <person name="Borkova D."/>
            <person name="Botchan M.R."/>
            <person name="Bouck J."/>
            <person name="Brokstein P."/>
            <person name="Brottier P."/>
            <person name="Burtis K.C."/>
            <person name="Busam D.A."/>
            <person name="Butler H."/>
            <person name="Cadieu E."/>
            <person name="Center A."/>
            <person name="Chandra I."/>
            <person name="Cherry J.M."/>
            <person name="Cawley S."/>
            <person name="Dahlke C."/>
            <person name="Davenport L.B."/>
            <person name="Davies P."/>
            <person name="de Pablos B."/>
            <person name="Delcher A."/>
            <person name="Deng Z."/>
            <person name="Mays A.D."/>
            <person name="Dew I."/>
            <person name="Dietz S.M."/>
            <person name="Dodson K."/>
            <person name="Doup L.E."/>
            <person name="Downes M."/>
            <person name="Dugan-Rocha S."/>
            <person name="Dunkov B.C."/>
            <person name="Dunn P."/>
            <person name="Durbin K.J."/>
            <person name="Evangelista C.C."/>
            <person name="Ferraz C."/>
            <person name="Ferriera S."/>
            <person name="Fleischmann W."/>
            <person name="Fosler C."/>
            <person name="Gabrielian A.E."/>
            <person name="Garg N.S."/>
            <person name="Gelbart W.M."/>
            <person name="Glasser K."/>
            <person name="Glodek A."/>
            <person name="Gong F."/>
            <person name="Gorrell J.H."/>
            <person name="Gu Z."/>
            <person name="Guan P."/>
            <person name="Harris M."/>
            <person name="Harris N.L."/>
            <person name="Harvey D.A."/>
            <person name="Heiman T.J."/>
            <person name="Hernandez J.R."/>
            <person name="Houck J."/>
            <person name="Hostin D."/>
            <person name="Houston K.A."/>
            <person name="Howland T.J."/>
            <person name="Wei M.-H."/>
            <person name="Ibegwam C."/>
            <person name="Jalali M."/>
            <person name="Kalush F."/>
            <person name="Karpen G.H."/>
            <person name="Ke Z."/>
            <person name="Kennison J.A."/>
            <person name="Ketchum K.A."/>
            <person name="Kimmel B.E."/>
            <person name="Kodira C.D."/>
            <person name="Kraft C.L."/>
            <person name="Kravitz S."/>
            <person name="Kulp D."/>
            <person name="Lai Z."/>
            <person name="Lasko P."/>
            <person name="Lei Y."/>
            <person name="Levitsky A.A."/>
            <person name="Li J.H."/>
            <person name="Li Z."/>
            <person name="Liang Y."/>
            <person name="Lin X."/>
            <person name="Liu X."/>
            <person name="Mattei B."/>
            <person name="McIntosh T.C."/>
            <person name="McLeod M.P."/>
            <person name="McPherson D."/>
            <person name="Merkulov G."/>
            <person name="Milshina N.V."/>
            <person name="Mobarry C."/>
            <person name="Morris J."/>
            <person name="Moshrefi A."/>
            <person name="Mount S.M."/>
            <person name="Moy M."/>
            <person name="Murphy B."/>
            <person name="Murphy L."/>
            <person name="Muzny D.M."/>
            <person name="Nelson D.L."/>
            <person name="Nelson D.R."/>
            <person name="Nelson K.A."/>
            <person name="Nixon K."/>
            <person name="Nusskern D.R."/>
            <person name="Pacleb J.M."/>
            <person name="Palazzolo M."/>
            <person name="Pittman G.S."/>
            <person name="Pan S."/>
            <person name="Pollard J."/>
            <person name="Puri V."/>
            <person name="Reese M.G."/>
            <person name="Reinert K."/>
            <person name="Remington K."/>
            <person name="Saunders R.D.C."/>
            <person name="Scheeler F."/>
            <person name="Shen H."/>
            <person name="Shue B.C."/>
            <person name="Siden-Kiamos I."/>
            <person name="Simpson M."/>
            <person name="Skupski M.P."/>
            <person name="Smith T.J."/>
            <person name="Spier E."/>
            <person name="Spradling A.C."/>
            <person name="Stapleton M."/>
            <person name="Strong R."/>
            <person name="Sun E."/>
            <person name="Svirskas R."/>
            <person name="Tector C."/>
            <person name="Turner R."/>
            <person name="Venter E."/>
            <person name="Wang A.H."/>
            <person name="Wang X."/>
            <person name="Wang Z.-Y."/>
            <person name="Wassarman D.A."/>
            <person name="Weinstock G.M."/>
            <person name="Weissenbach J."/>
            <person name="Williams S.M."/>
            <person name="Woodage T."/>
            <person name="Worley K.C."/>
            <person name="Wu D."/>
            <person name="Yang S."/>
            <person name="Yao Q.A."/>
            <person name="Ye J."/>
            <person name="Yeh R.-F."/>
            <person name="Zaveri J.S."/>
            <person name="Zhan M."/>
            <person name="Zhang G."/>
            <person name="Zhao Q."/>
            <person name="Zheng L."/>
            <person name="Zheng X.H."/>
            <person name="Zhong F.N."/>
            <person name="Zhong W."/>
            <person name="Zhou X."/>
            <person name="Zhu S.C."/>
            <person name="Zhu X."/>
            <person name="Smith H.O."/>
            <person name="Gibbs R.A."/>
            <person name="Myers E.W."/>
            <person name="Rubin G.M."/>
            <person name="Venter J.C."/>
        </authorList>
    </citation>
    <scope>NUCLEOTIDE SEQUENCE [LARGE SCALE GENOMIC DNA]</scope>
    <source>
        <strain>Berkeley</strain>
    </source>
</reference>
<reference key="2">
    <citation type="journal article" date="2002" name="Genome Biol.">
        <title>Annotation of the Drosophila melanogaster euchromatic genome: a systematic review.</title>
        <authorList>
            <person name="Misra S."/>
            <person name="Crosby M.A."/>
            <person name="Mungall C.J."/>
            <person name="Matthews B.B."/>
            <person name="Campbell K.S."/>
            <person name="Hradecky P."/>
            <person name="Huang Y."/>
            <person name="Kaminker J.S."/>
            <person name="Millburn G.H."/>
            <person name="Prochnik S.E."/>
            <person name="Smith C.D."/>
            <person name="Tupy J.L."/>
            <person name="Whitfield E.J."/>
            <person name="Bayraktaroglu L."/>
            <person name="Berman B.P."/>
            <person name="Bettencourt B.R."/>
            <person name="Celniker S.E."/>
            <person name="de Grey A.D.N.J."/>
            <person name="Drysdale R.A."/>
            <person name="Harris N.L."/>
            <person name="Richter J."/>
            <person name="Russo S."/>
            <person name="Schroeder A.J."/>
            <person name="Shu S.Q."/>
            <person name="Stapleton M."/>
            <person name="Yamada C."/>
            <person name="Ashburner M."/>
            <person name="Gelbart W.M."/>
            <person name="Rubin G.M."/>
            <person name="Lewis S.E."/>
        </authorList>
    </citation>
    <scope>GENOME REANNOTATION</scope>
    <source>
        <strain>Berkeley</strain>
    </source>
</reference>
<reference key="3">
    <citation type="journal article" date="2002" name="Genome Biol.">
        <title>A Drosophila full-length cDNA resource.</title>
        <authorList>
            <person name="Stapleton M."/>
            <person name="Carlson J.W."/>
            <person name="Brokstein P."/>
            <person name="Yu C."/>
            <person name="Champe M."/>
            <person name="George R.A."/>
            <person name="Guarin H."/>
            <person name="Kronmiller B."/>
            <person name="Pacleb J.M."/>
            <person name="Park S."/>
            <person name="Wan K.H."/>
            <person name="Rubin G.M."/>
            <person name="Celniker S.E."/>
        </authorList>
    </citation>
    <scope>NUCLEOTIDE SEQUENCE [LARGE SCALE MRNA]</scope>
    <source>
        <strain>Berkeley</strain>
        <tissue>Embryo</tissue>
    </source>
</reference>
<reference key="4">
    <citation type="journal article" date="1998" name="Development">
        <title>Genetic dissection of sperm individualization in Drosophila melanogaster.</title>
        <authorList>
            <person name="Fabrizio J.J."/>
            <person name="Hime G."/>
            <person name="Lemmon S.K."/>
            <person name="Bazinet C."/>
        </authorList>
    </citation>
    <scope>FUNCTION</scope>
</reference>
<reference key="5">
    <citation type="journal article" date="2008" name="J. Proteome Res.">
        <title>Phosphoproteome analysis of Drosophila melanogaster embryos.</title>
        <authorList>
            <person name="Zhai B."/>
            <person name="Villen J."/>
            <person name="Beausoleil S.A."/>
            <person name="Mintseris J."/>
            <person name="Gygi S.P."/>
        </authorList>
    </citation>
    <scope>PHOSPHORYLATION [LARGE SCALE ANALYSIS] AT THR-30</scope>
    <scope>IDENTIFICATION BY MASS SPECTROMETRY</scope>
    <source>
        <tissue>Embryo</tissue>
    </source>
</reference>
<protein>
    <recommendedName>
        <fullName>Vacuolar protein sorting-associated protein 54</fullName>
    </recommendedName>
    <alternativeName>
        <fullName>Protein scattered</fullName>
    </alternativeName>
</protein>
<dbReference type="EMBL" id="AE014134">
    <property type="protein sequence ID" value="AAF52774.1"/>
    <property type="molecule type" value="Genomic_DNA"/>
</dbReference>
<dbReference type="EMBL" id="AY061309">
    <property type="protein sequence ID" value="AAL28857.1"/>
    <property type="molecule type" value="mRNA"/>
</dbReference>
<dbReference type="RefSeq" id="NP_524905.1">
    <property type="nucleotide sequence ID" value="NM_080166.4"/>
</dbReference>
<dbReference type="SMR" id="Q9VLC0"/>
<dbReference type="BioGRID" id="71064">
    <property type="interactions" value="2"/>
</dbReference>
<dbReference type="ComplexPortal" id="CPX-2788">
    <property type="entry name" value="GARP tethering complex, Vps50 variant"/>
</dbReference>
<dbReference type="ComplexPortal" id="CPX-2793">
    <property type="entry name" value="GARP tethering complex, Vps54 variant"/>
</dbReference>
<dbReference type="FunCoup" id="Q9VLC0">
    <property type="interactions" value="1476"/>
</dbReference>
<dbReference type="IntAct" id="Q9VLC0">
    <property type="interactions" value="2"/>
</dbReference>
<dbReference type="STRING" id="7227.FBpp0079409"/>
<dbReference type="iPTMnet" id="Q9VLC0"/>
<dbReference type="PaxDb" id="7227-FBpp0079409"/>
<dbReference type="EnsemblMetazoa" id="FBtr0079809">
    <property type="protein sequence ID" value="FBpp0079409"/>
    <property type="gene ID" value="FBgn0011232"/>
</dbReference>
<dbReference type="GeneID" id="47942"/>
<dbReference type="KEGG" id="dme:Dmel_CG3766"/>
<dbReference type="UCSC" id="CG3766-RA">
    <property type="organism name" value="d. melanogaster"/>
</dbReference>
<dbReference type="AGR" id="FB:FBgn0011232"/>
<dbReference type="CTD" id="47942"/>
<dbReference type="FlyBase" id="FBgn0011232">
    <property type="gene designation" value="scat"/>
</dbReference>
<dbReference type="VEuPathDB" id="VectorBase:FBgn0011232"/>
<dbReference type="eggNOG" id="KOG2115">
    <property type="taxonomic scope" value="Eukaryota"/>
</dbReference>
<dbReference type="GeneTree" id="ENSGT00390000000583"/>
<dbReference type="HOGENOM" id="CLU_005185_1_0_1"/>
<dbReference type="InParanoid" id="Q9VLC0"/>
<dbReference type="OMA" id="FSFVQSY"/>
<dbReference type="OrthoDB" id="10259024at2759"/>
<dbReference type="PhylomeDB" id="Q9VLC0"/>
<dbReference type="Reactome" id="R-DME-6811440">
    <property type="pathway name" value="Retrograde transport at the Trans-Golgi-Network"/>
</dbReference>
<dbReference type="SignaLink" id="Q9VLC0"/>
<dbReference type="BioGRID-ORCS" id="47942">
    <property type="hits" value="1 hit in 1 CRISPR screen"/>
</dbReference>
<dbReference type="GenomeRNAi" id="47942"/>
<dbReference type="PRO" id="PR:Q9VLC0"/>
<dbReference type="Proteomes" id="UP000000803">
    <property type="component" value="Chromosome 2L"/>
</dbReference>
<dbReference type="Bgee" id="FBgn0011232">
    <property type="expression patterns" value="Expressed in spermathecum and 83 other cell types or tissues"/>
</dbReference>
<dbReference type="GO" id="GO:0005829">
    <property type="term" value="C:cytosol"/>
    <property type="evidence" value="ECO:0007669"/>
    <property type="project" value="GOC"/>
</dbReference>
<dbReference type="GO" id="GO:0000938">
    <property type="term" value="C:GARP complex"/>
    <property type="evidence" value="ECO:0000314"/>
    <property type="project" value="FlyBase"/>
</dbReference>
<dbReference type="GO" id="GO:0005794">
    <property type="term" value="C:Golgi apparatus"/>
    <property type="evidence" value="ECO:0000250"/>
    <property type="project" value="UniProtKB"/>
</dbReference>
<dbReference type="GO" id="GO:0000138">
    <property type="term" value="C:Golgi trans cisterna"/>
    <property type="evidence" value="ECO:0000314"/>
    <property type="project" value="FlyBase"/>
</dbReference>
<dbReference type="GO" id="GO:0019905">
    <property type="term" value="F:syntaxin binding"/>
    <property type="evidence" value="ECO:0000318"/>
    <property type="project" value="GO_Central"/>
</dbReference>
<dbReference type="GO" id="GO:0001675">
    <property type="term" value="P:acrosome assembly"/>
    <property type="evidence" value="ECO:0000315"/>
    <property type="project" value="FlyBase"/>
</dbReference>
<dbReference type="GO" id="GO:0032456">
    <property type="term" value="P:endocytic recycling"/>
    <property type="evidence" value="ECO:0000314"/>
    <property type="project" value="FlyBase"/>
</dbReference>
<dbReference type="GO" id="GO:0006896">
    <property type="term" value="P:Golgi to vacuole transport"/>
    <property type="evidence" value="ECO:0000250"/>
    <property type="project" value="UniProtKB"/>
</dbReference>
<dbReference type="GO" id="GO:0015031">
    <property type="term" value="P:protein transport"/>
    <property type="evidence" value="ECO:0007669"/>
    <property type="project" value="UniProtKB-KW"/>
</dbReference>
<dbReference type="GO" id="GO:0042147">
    <property type="term" value="P:retrograde transport, endosome to Golgi"/>
    <property type="evidence" value="ECO:0000250"/>
    <property type="project" value="UniProtKB"/>
</dbReference>
<dbReference type="GO" id="GO:0007291">
    <property type="term" value="P:sperm individualization"/>
    <property type="evidence" value="ECO:0000315"/>
    <property type="project" value="FlyBase"/>
</dbReference>
<dbReference type="GO" id="GO:0007290">
    <property type="term" value="P:spermatid nucleus elongation"/>
    <property type="evidence" value="ECO:0000315"/>
    <property type="project" value="FlyBase"/>
</dbReference>
<dbReference type="FunFam" id="1.20.1280.130:FF:000001">
    <property type="entry name" value="Vacuolar protein sorting-associated protein 54"/>
    <property type="match status" value="1"/>
</dbReference>
<dbReference type="Gene3D" id="1.20.1280.130">
    <property type="match status" value="1"/>
</dbReference>
<dbReference type="Gene3D" id="6.10.250.860">
    <property type="match status" value="1"/>
</dbReference>
<dbReference type="InterPro" id="IPR039745">
    <property type="entry name" value="Vps54"/>
</dbReference>
<dbReference type="InterPro" id="IPR012501">
    <property type="entry name" value="Vps54_C"/>
</dbReference>
<dbReference type="InterPro" id="IPR019515">
    <property type="entry name" value="VPS54_N"/>
</dbReference>
<dbReference type="PANTHER" id="PTHR12965">
    <property type="entry name" value="VACUOLAR PROTEIN SORTING 54"/>
    <property type="match status" value="1"/>
</dbReference>
<dbReference type="PANTHER" id="PTHR12965:SF0">
    <property type="entry name" value="VACUOLAR PROTEIN SORTING-ASSOCIATED PROTEIN 54"/>
    <property type="match status" value="1"/>
</dbReference>
<dbReference type="Pfam" id="PF07928">
    <property type="entry name" value="Vps54"/>
    <property type="match status" value="1"/>
</dbReference>
<dbReference type="Pfam" id="PF10475">
    <property type="entry name" value="Vps54_N"/>
    <property type="match status" value="1"/>
</dbReference>